<gene>
    <name type="primary">mt:ATPase6</name>
    <name type="synonym">ATP6</name>
    <name type="synonym">ATPase6</name>
</gene>
<sequence>MMTNLFSVFDPSAIFNLSLNWLSTFLGLLMIPSIYWLMPSRYNIVWNSILLTLHKEFKTLLGPSGHNGSTFIFISLFSLILFNNFMGLFPYIFTSTSHLTLTLSLALPLWLCFMLYGWINHTQHMFAHLVPQGTPAVLMPFMVCIETISNIIRPGTLAVRLTANMIAGHLLLTLLGNTGPSMSYLLVTFLLTAQIALLVLESAVAMIQSYVFAVLSTLYSSEVN</sequence>
<proteinExistence type="inferred from homology"/>
<geneLocation type="mitochondrion" evidence="4"/>
<reference evidence="4" key="1">
    <citation type="submission" date="1999-11" db="EMBL/GenBank/DDBJ databases">
        <authorList>
            <person name="Ballard J.W.O."/>
        </authorList>
    </citation>
    <scope>NUCLEOTIDE SEQUENCE [GENOMIC DNA]</scope>
    <source>
        <strain evidence="4">BG1</strain>
        <strain evidence="3">G52</strain>
    </source>
</reference>
<feature type="chain" id="PRO_0000233911" description="ATP synthase subunit a">
    <location>
        <begin position="1"/>
        <end position="224"/>
    </location>
</feature>
<feature type="transmembrane region" description="Helical" evidence="1">
    <location>
        <begin position="17"/>
        <end position="37"/>
    </location>
</feature>
<feature type="transmembrane region" description="Helical" evidence="1">
    <location>
        <begin position="72"/>
        <end position="92"/>
    </location>
</feature>
<feature type="transmembrane region" description="Helical" evidence="1">
    <location>
        <begin position="99"/>
        <end position="119"/>
    </location>
</feature>
<feature type="transmembrane region" description="Helical" evidence="1">
    <location>
        <begin position="125"/>
        <end position="145"/>
    </location>
</feature>
<feature type="transmembrane region" description="Helical" evidence="1">
    <location>
        <begin position="170"/>
        <end position="190"/>
    </location>
</feature>
<feature type="transmembrane region" description="Helical" evidence="1">
    <location>
        <begin position="195"/>
        <end position="215"/>
    </location>
</feature>
<feature type="sequence variant" description="In strain: BG1.">
    <original>V</original>
    <variation>I</variation>
    <location>
        <position position="137"/>
    </location>
</feature>
<protein>
    <recommendedName>
        <fullName>ATP synthase subunit a</fullName>
    </recommendedName>
    <alternativeName>
        <fullName>F-ATPase protein 6</fullName>
    </alternativeName>
</protein>
<name>ATP6_DROMA</name>
<dbReference type="EMBL" id="AF200831">
    <property type="protein sequence ID" value="AAF77268.1"/>
    <property type="molecule type" value="Genomic_DNA"/>
</dbReference>
<dbReference type="EMBL" id="AF200830">
    <property type="protein sequence ID" value="AAF77255.1"/>
    <property type="molecule type" value="Genomic_DNA"/>
</dbReference>
<dbReference type="RefSeq" id="NP_987111.1">
    <property type="nucleotide sequence ID" value="NC_005779.1"/>
</dbReference>
<dbReference type="SMR" id="Q7IV55"/>
<dbReference type="EnsemblMetazoa" id="GeneID_2760928_t1">
    <property type="protein sequence ID" value="NP_987111.1"/>
    <property type="gene ID" value="GeneID_2760928"/>
</dbReference>
<dbReference type="GeneID" id="2760928"/>
<dbReference type="CTD" id="4508"/>
<dbReference type="OrthoDB" id="72760at7215"/>
<dbReference type="Proteomes" id="UP000515162">
    <property type="component" value="Mitochondrion MT"/>
</dbReference>
<dbReference type="GO" id="GO:0005743">
    <property type="term" value="C:mitochondrial inner membrane"/>
    <property type="evidence" value="ECO:0007669"/>
    <property type="project" value="UniProtKB-SubCell"/>
</dbReference>
<dbReference type="GO" id="GO:0045259">
    <property type="term" value="C:proton-transporting ATP synthase complex"/>
    <property type="evidence" value="ECO:0007669"/>
    <property type="project" value="UniProtKB-KW"/>
</dbReference>
<dbReference type="GO" id="GO:0046933">
    <property type="term" value="F:proton-transporting ATP synthase activity, rotational mechanism"/>
    <property type="evidence" value="ECO:0007669"/>
    <property type="project" value="TreeGrafter"/>
</dbReference>
<dbReference type="CDD" id="cd00310">
    <property type="entry name" value="ATP-synt_Fo_a_6"/>
    <property type="match status" value="1"/>
</dbReference>
<dbReference type="FunFam" id="1.20.120.220:FF:000008">
    <property type="entry name" value="ATP synthase subunit a"/>
    <property type="match status" value="1"/>
</dbReference>
<dbReference type="Gene3D" id="1.20.120.220">
    <property type="entry name" value="ATP synthase, F0 complex, subunit A"/>
    <property type="match status" value="1"/>
</dbReference>
<dbReference type="InterPro" id="IPR000568">
    <property type="entry name" value="ATP_synth_F0_asu"/>
</dbReference>
<dbReference type="InterPro" id="IPR023011">
    <property type="entry name" value="ATP_synth_F0_asu_AS"/>
</dbReference>
<dbReference type="InterPro" id="IPR045083">
    <property type="entry name" value="ATP_synth_F0_asu_bact/mt"/>
</dbReference>
<dbReference type="InterPro" id="IPR035908">
    <property type="entry name" value="F0_ATP_A_sf"/>
</dbReference>
<dbReference type="NCBIfam" id="TIGR01131">
    <property type="entry name" value="ATP_synt_6_or_A"/>
    <property type="match status" value="1"/>
</dbReference>
<dbReference type="PANTHER" id="PTHR11410">
    <property type="entry name" value="ATP SYNTHASE SUBUNIT A"/>
    <property type="match status" value="1"/>
</dbReference>
<dbReference type="PANTHER" id="PTHR11410:SF0">
    <property type="entry name" value="ATP SYNTHASE SUBUNIT A"/>
    <property type="match status" value="1"/>
</dbReference>
<dbReference type="Pfam" id="PF00119">
    <property type="entry name" value="ATP-synt_A"/>
    <property type="match status" value="1"/>
</dbReference>
<dbReference type="PRINTS" id="PR00123">
    <property type="entry name" value="ATPASEA"/>
</dbReference>
<dbReference type="SUPFAM" id="SSF81336">
    <property type="entry name" value="F1F0 ATP synthase subunit A"/>
    <property type="match status" value="1"/>
</dbReference>
<dbReference type="PROSITE" id="PS00449">
    <property type="entry name" value="ATPASE_A"/>
    <property type="match status" value="1"/>
</dbReference>
<organism>
    <name type="scientific">Drosophila mauritiana</name>
    <name type="common">Fruit fly</name>
    <dbReference type="NCBI Taxonomy" id="7226"/>
    <lineage>
        <taxon>Eukaryota</taxon>
        <taxon>Metazoa</taxon>
        <taxon>Ecdysozoa</taxon>
        <taxon>Arthropoda</taxon>
        <taxon>Hexapoda</taxon>
        <taxon>Insecta</taxon>
        <taxon>Pterygota</taxon>
        <taxon>Neoptera</taxon>
        <taxon>Endopterygota</taxon>
        <taxon>Diptera</taxon>
        <taxon>Brachycera</taxon>
        <taxon>Muscomorpha</taxon>
        <taxon>Ephydroidea</taxon>
        <taxon>Drosophilidae</taxon>
        <taxon>Drosophila</taxon>
        <taxon>Sophophora</taxon>
    </lineage>
</organism>
<comment type="function">
    <text>Mitochondrial membrane ATP synthase (F(1)F(0) ATP synthase or Complex V) produces ATP from ADP in the presence of a proton gradient across the membrane which is generated by electron transport complexes of the respiratory chain. F-type ATPases consist of two structural domains, F(1) - containing the extramembraneous catalytic core and F(0) - containing the membrane proton channel, linked together by a central stalk and a peripheral stalk. During catalysis, ATP synthesis in the catalytic domain of F(1) is coupled via a rotary mechanism of the central stalk subunits to proton translocation. Key component of the proton channel; it may play a direct role in the translocation of protons across the membrane.</text>
</comment>
<comment type="subunit">
    <text evidence="2">F-type ATPases have 2 components, CF(1) - the catalytic core - and CF(0) - the membrane proton channel. CF(1) has five subunits: alpha(3), beta(3), gamma(1), delta(1), epsilon(1). CF(0) has three main subunits: a, b and c.</text>
</comment>
<comment type="subcellular location">
    <subcellularLocation>
        <location>Mitochondrion inner membrane</location>
        <topology>Multi-pass membrane protein</topology>
    </subcellularLocation>
</comment>
<comment type="similarity">
    <text evidence="1">Belongs to the ATPase A chain family.</text>
</comment>
<accession>Q7IV55</accession>
<accession>Q9MGN0</accession>
<keyword id="KW-0066">ATP synthesis</keyword>
<keyword id="KW-0138">CF(0)</keyword>
<keyword id="KW-0375">Hydrogen ion transport</keyword>
<keyword id="KW-0406">Ion transport</keyword>
<keyword id="KW-0472">Membrane</keyword>
<keyword id="KW-0496">Mitochondrion</keyword>
<keyword id="KW-0999">Mitochondrion inner membrane</keyword>
<keyword id="KW-0812">Transmembrane</keyword>
<keyword id="KW-1133">Transmembrane helix</keyword>
<keyword id="KW-0813">Transport</keyword>
<evidence type="ECO:0000255" key="1"/>
<evidence type="ECO:0000305" key="2"/>
<evidence type="ECO:0000312" key="3">
    <source>
        <dbReference type="EMBL" id="AAF77255.1"/>
    </source>
</evidence>
<evidence type="ECO:0000312" key="4">
    <source>
        <dbReference type="EMBL" id="AAF77268.1"/>
    </source>
</evidence>